<dbReference type="EMBL" id="EF191197">
    <property type="protein sequence ID" value="ABM67547.1"/>
    <property type="molecule type" value="mRNA"/>
</dbReference>
<dbReference type="RefSeq" id="NP_001300724.1">
    <property type="nucleotide sequence ID" value="NM_001313795.2"/>
</dbReference>
<dbReference type="RefSeq" id="XP_038534724.1">
    <property type="nucleotide sequence ID" value="XM_038678796.1"/>
</dbReference>
<dbReference type="SMR" id="A2IBY8"/>
<dbReference type="FunCoup" id="A2IBY8">
    <property type="interactions" value="9"/>
</dbReference>
<dbReference type="STRING" id="9615.ENSCAFP00000000190"/>
<dbReference type="PaxDb" id="9612-ENSCAFP00000000190"/>
<dbReference type="Ensembl" id="ENSCAFT00000000211.5">
    <property type="protein sequence ID" value="ENSCAFP00000000190.4"/>
    <property type="gene ID" value="ENSCAFG00000000128.5"/>
</dbReference>
<dbReference type="Ensembl" id="ENSCAFT00030024559.1">
    <property type="protein sequence ID" value="ENSCAFP00030021444.1"/>
    <property type="gene ID" value="ENSCAFG00030013268.1"/>
</dbReference>
<dbReference type="Ensembl" id="ENSCAFT00040011312.1">
    <property type="protein sequence ID" value="ENSCAFP00040009799.1"/>
    <property type="gene ID" value="ENSCAFG00040006058.1"/>
</dbReference>
<dbReference type="Ensembl" id="ENSCAFT00845014597.1">
    <property type="protein sequence ID" value="ENSCAFP00845011311.1"/>
    <property type="gene ID" value="ENSCAFG00845008298.1"/>
</dbReference>
<dbReference type="GeneID" id="607104"/>
<dbReference type="KEGG" id="cfa:607104"/>
<dbReference type="CTD" id="4284"/>
<dbReference type="VEuPathDB" id="HostDB:ENSCAFG00845008298"/>
<dbReference type="VGNC" id="VGNC:43241">
    <property type="gene designation" value="MIP"/>
</dbReference>
<dbReference type="eggNOG" id="KOG0223">
    <property type="taxonomic scope" value="Eukaryota"/>
</dbReference>
<dbReference type="GeneTree" id="ENSGT00940000156260"/>
<dbReference type="InParanoid" id="A2IBY8"/>
<dbReference type="OMA" id="LALNTMH"/>
<dbReference type="OrthoDB" id="3222at2759"/>
<dbReference type="Reactome" id="R-CFA-432047">
    <property type="pathway name" value="Passive transport by Aquaporins"/>
</dbReference>
<dbReference type="Proteomes" id="UP000002254">
    <property type="component" value="Chromosome 10"/>
</dbReference>
<dbReference type="Proteomes" id="UP000694429">
    <property type="component" value="Chromosome 10"/>
</dbReference>
<dbReference type="Proteomes" id="UP000694542">
    <property type="component" value="Chromosome 10"/>
</dbReference>
<dbReference type="Proteomes" id="UP000805418">
    <property type="component" value="Chromosome 10"/>
</dbReference>
<dbReference type="Bgee" id="ENSCAFG00000000128">
    <property type="expression patterns" value="Expressed in testis and 8 other cell types or tissues"/>
</dbReference>
<dbReference type="GO" id="GO:0070161">
    <property type="term" value="C:anchoring junction"/>
    <property type="evidence" value="ECO:0007669"/>
    <property type="project" value="UniProtKB-SubCell"/>
</dbReference>
<dbReference type="GO" id="GO:0016324">
    <property type="term" value="C:apical plasma membrane"/>
    <property type="evidence" value="ECO:0000318"/>
    <property type="project" value="GO_Central"/>
</dbReference>
<dbReference type="GO" id="GO:0005886">
    <property type="term" value="C:plasma membrane"/>
    <property type="evidence" value="ECO:0000250"/>
    <property type="project" value="UniProtKB"/>
</dbReference>
<dbReference type="GO" id="GO:0005516">
    <property type="term" value="F:calmodulin binding"/>
    <property type="evidence" value="ECO:0000250"/>
    <property type="project" value="UniProtKB"/>
</dbReference>
<dbReference type="GO" id="GO:0098631">
    <property type="term" value="F:cell adhesion mediator activity"/>
    <property type="evidence" value="ECO:0000250"/>
    <property type="project" value="UniProtKB"/>
</dbReference>
<dbReference type="GO" id="GO:0005212">
    <property type="term" value="F:structural constituent of eye lens"/>
    <property type="evidence" value="ECO:0007669"/>
    <property type="project" value="UniProtKB-KW"/>
</dbReference>
<dbReference type="GO" id="GO:0015250">
    <property type="term" value="F:water channel activity"/>
    <property type="evidence" value="ECO:0000250"/>
    <property type="project" value="UniProtKB"/>
</dbReference>
<dbReference type="GO" id="GO:1990349">
    <property type="term" value="P:gap junction-mediated intercellular transport"/>
    <property type="evidence" value="ECO:0007669"/>
    <property type="project" value="Ensembl"/>
</dbReference>
<dbReference type="GO" id="GO:0034109">
    <property type="term" value="P:homotypic cell-cell adhesion"/>
    <property type="evidence" value="ECO:0000250"/>
    <property type="project" value="UniProtKB"/>
</dbReference>
<dbReference type="GO" id="GO:0002088">
    <property type="term" value="P:lens development in camera-type eye"/>
    <property type="evidence" value="ECO:0007669"/>
    <property type="project" value="Ensembl"/>
</dbReference>
<dbReference type="GO" id="GO:0036438">
    <property type="term" value="P:maintenance of lens transparency"/>
    <property type="evidence" value="ECO:0000250"/>
    <property type="project" value="UniProtKB"/>
</dbReference>
<dbReference type="GO" id="GO:0007601">
    <property type="term" value="P:visual perception"/>
    <property type="evidence" value="ECO:0007669"/>
    <property type="project" value="Ensembl"/>
</dbReference>
<dbReference type="GO" id="GO:0006833">
    <property type="term" value="P:water transport"/>
    <property type="evidence" value="ECO:0000250"/>
    <property type="project" value="UniProtKB"/>
</dbReference>
<dbReference type="CDD" id="cd00333">
    <property type="entry name" value="MIP"/>
    <property type="match status" value="1"/>
</dbReference>
<dbReference type="FunFam" id="1.20.1080.10:FF:000003">
    <property type="entry name" value="Lens fiber major intrinsic"/>
    <property type="match status" value="1"/>
</dbReference>
<dbReference type="Gene3D" id="1.20.1080.10">
    <property type="entry name" value="Glycerol uptake facilitator protein"/>
    <property type="match status" value="1"/>
</dbReference>
<dbReference type="InterPro" id="IPR023271">
    <property type="entry name" value="Aquaporin-like"/>
</dbReference>
<dbReference type="InterPro" id="IPR034294">
    <property type="entry name" value="Aquaporin_transptr"/>
</dbReference>
<dbReference type="InterPro" id="IPR000425">
    <property type="entry name" value="MIP"/>
</dbReference>
<dbReference type="InterPro" id="IPR022357">
    <property type="entry name" value="MIP_CS"/>
</dbReference>
<dbReference type="NCBIfam" id="TIGR00861">
    <property type="entry name" value="MIP"/>
    <property type="match status" value="1"/>
</dbReference>
<dbReference type="PANTHER" id="PTHR19139">
    <property type="entry name" value="AQUAPORIN TRANSPORTER"/>
    <property type="match status" value="1"/>
</dbReference>
<dbReference type="PANTHER" id="PTHR19139:SF39">
    <property type="entry name" value="LENS FIBER MAJOR INTRINSIC PROTEIN"/>
    <property type="match status" value="1"/>
</dbReference>
<dbReference type="Pfam" id="PF00230">
    <property type="entry name" value="MIP"/>
    <property type="match status" value="1"/>
</dbReference>
<dbReference type="PRINTS" id="PR02014">
    <property type="entry name" value="AQUAPORIN2"/>
</dbReference>
<dbReference type="PRINTS" id="PR00783">
    <property type="entry name" value="MINTRINSICP"/>
</dbReference>
<dbReference type="SUPFAM" id="SSF81338">
    <property type="entry name" value="Aquaporin-like"/>
    <property type="match status" value="1"/>
</dbReference>
<dbReference type="PROSITE" id="PS00221">
    <property type="entry name" value="MIP"/>
    <property type="match status" value="1"/>
</dbReference>
<proteinExistence type="evidence at transcript level"/>
<name>MIP_CANLF</name>
<reference key="1">
    <citation type="submission" date="2006-12" db="EMBL/GenBank/DDBJ databases">
        <authorList>
            <person name="Wistow G."/>
        </authorList>
    </citation>
    <scope>NUCLEOTIDE SEQUENCE [MRNA]</scope>
    <source>
        <tissue>Lens</tissue>
    </source>
</reference>
<comment type="function">
    <text evidence="2">Aquaporins form homotetrameric transmembrane channels, with each monomer independently mediating water transport across the plasma membrane along its osmotic gradient. Specifically expressed in lens fiber cells, this aquaporin is crucial for maintaining lens water homeostasis and transparency. Beyond water permeability, it also acts as a cell-to-cell adhesion molecule, forming thin junctions between lens fiber cells that are essential for maintaining the ordered structure and transparency of the lens.</text>
</comment>
<comment type="catalytic activity">
    <reaction evidence="2">
        <text>H2O(in) = H2O(out)</text>
        <dbReference type="Rhea" id="RHEA:29667"/>
        <dbReference type="ChEBI" id="CHEBI:15377"/>
    </reaction>
</comment>
<comment type="activity regulation">
    <text evidence="2">The water channel activity is inhibited by calcium through calmodulin/CALM.</text>
</comment>
<comment type="subunit">
    <text evidence="1 2">Homotetramer; each monomer provides an independent water pore. Two homotetramers on opposing membranes can dimerize, forming a cell-cell junction. Interacts with CALM; the calcium-calmodulin/CALM complex interacts with the cytoplasmic domains of two aquaporins, leading to channel closure (By similarity). Interacts with BFSP1 (via C-terminus); prevents calcium-dependent inhibition of the water channel activity (By similarity).</text>
</comment>
<comment type="subcellular location">
    <subcellularLocation>
        <location evidence="2">Cell membrane</location>
        <topology evidence="3">Multi-pass membrane protein</topology>
    </subcellularLocation>
    <subcellularLocation>
        <location evidence="3">Cell junction</location>
    </subcellularLocation>
    <text evidence="3">Localizes to thin cell-cell junctions in lens fiber cells.</text>
</comment>
<comment type="domain">
    <text evidence="3">Aquaporins contain two tandem repeats each containing three membrane-spanning domains and a pore-forming loop with the signature motif Asn-Pro-Ala (NPA).</text>
</comment>
<comment type="PTM">
    <text evidence="3">Subject to partial proteolytic cleavage in the eye lens core. Partial proteolysis promotes interactions between tetramers from adjoining membranes.</text>
</comment>
<comment type="PTM">
    <text evidence="2">Fatty acylated at Met-1 and Lys-238. The acyl modifications, in decreasing order of ion abundance, are: oleoyl (C18:1) &gt; palmitoyl (C16:0) &gt; stearoyl (C18:0) &gt; eicosenoyl (C20:1) &gt; dihomo-gamma-linolenoyl (C20:3) &gt; palmitoleoyl (C16:1) &gt; eicosadienoyl (C20:2).</text>
</comment>
<comment type="similarity">
    <text evidence="5">Belongs to the MIP/aquaporin (TC 1.A.8) family.</text>
</comment>
<gene>
    <name evidence="2" type="primary">MIP</name>
</gene>
<organism>
    <name type="scientific">Canis lupus familiaris</name>
    <name type="common">Dog</name>
    <name type="synonym">Canis familiaris</name>
    <dbReference type="NCBI Taxonomy" id="9615"/>
    <lineage>
        <taxon>Eukaryota</taxon>
        <taxon>Metazoa</taxon>
        <taxon>Chordata</taxon>
        <taxon>Craniata</taxon>
        <taxon>Vertebrata</taxon>
        <taxon>Euteleostomi</taxon>
        <taxon>Mammalia</taxon>
        <taxon>Eutheria</taxon>
        <taxon>Laurasiatheria</taxon>
        <taxon>Carnivora</taxon>
        <taxon>Caniformia</taxon>
        <taxon>Canidae</taxon>
        <taxon>Canis</taxon>
    </lineage>
</organism>
<evidence type="ECO:0000250" key="1">
    <source>
        <dbReference type="UniProtKB" id="P06624"/>
    </source>
</evidence>
<evidence type="ECO:0000250" key="2">
    <source>
        <dbReference type="UniProtKB" id="P30301"/>
    </source>
</evidence>
<evidence type="ECO:0000250" key="3">
    <source>
        <dbReference type="UniProtKB" id="Q6J8I9"/>
    </source>
</evidence>
<evidence type="ECO:0000256" key="4">
    <source>
        <dbReference type="SAM" id="MobiDB-lite"/>
    </source>
</evidence>
<evidence type="ECO:0000305" key="5"/>
<keyword id="KW-0965">Cell junction</keyword>
<keyword id="KW-1003">Cell membrane</keyword>
<keyword id="KW-0273">Eye lens protein</keyword>
<keyword id="KW-0449">Lipoprotein</keyword>
<keyword id="KW-0472">Membrane</keyword>
<keyword id="KW-0597">Phosphoprotein</keyword>
<keyword id="KW-1185">Reference proteome</keyword>
<keyword id="KW-0677">Repeat</keyword>
<keyword id="KW-0716">Sensory transduction</keyword>
<keyword id="KW-0812">Transmembrane</keyword>
<keyword id="KW-1133">Transmembrane helix</keyword>
<keyword id="KW-0813">Transport</keyword>
<feature type="chain" id="PRO_0000286347" description="Lens fiber major intrinsic protein">
    <location>
        <begin position="1"/>
        <end position="263"/>
    </location>
</feature>
<feature type="topological domain" description="Cytoplasmic" evidence="1">
    <location>
        <begin position="1"/>
        <end position="9"/>
    </location>
</feature>
<feature type="transmembrane region" description="Helical; Name=1" evidence="1">
    <location>
        <begin position="10"/>
        <end position="29"/>
    </location>
</feature>
<feature type="topological domain" description="Extracellular" evidence="1">
    <location>
        <begin position="30"/>
        <end position="41"/>
    </location>
</feature>
<feature type="transmembrane region" description="Helical; Name=2" evidence="1">
    <location>
        <begin position="42"/>
        <end position="59"/>
    </location>
</feature>
<feature type="topological domain" description="Cytoplasmic" evidence="1">
    <location>
        <begin position="60"/>
        <end position="61"/>
    </location>
</feature>
<feature type="intramembrane region" description="Discontinuously helical" evidence="1">
    <location>
        <begin position="62"/>
        <end position="77"/>
    </location>
</feature>
<feature type="topological domain" description="Cytoplasmic" evidence="1">
    <location>
        <begin position="78"/>
        <end position="82"/>
    </location>
</feature>
<feature type="transmembrane region" description="Helical; Name=3" evidence="1">
    <location>
        <begin position="83"/>
        <end position="106"/>
    </location>
</feature>
<feature type="topological domain" description="Extracellular" evidence="1">
    <location>
        <begin position="107"/>
        <end position="127"/>
    </location>
</feature>
<feature type="transmembrane region" description="Helical; Name=4" evidence="1">
    <location>
        <begin position="128"/>
        <end position="148"/>
    </location>
</feature>
<feature type="topological domain" description="Cytoplasmic" evidence="1">
    <location>
        <begin position="149"/>
        <end position="156"/>
    </location>
</feature>
<feature type="transmembrane region" description="Helical; Name=5" evidence="1">
    <location>
        <begin position="157"/>
        <end position="175"/>
    </location>
</feature>
<feature type="topological domain" description="Extracellular" evidence="1">
    <location>
        <begin position="176"/>
        <end position="178"/>
    </location>
</feature>
<feature type="intramembrane region" description="Discontinuously helical" evidence="1">
    <location>
        <begin position="179"/>
        <end position="193"/>
    </location>
</feature>
<feature type="topological domain" description="Extracellular" evidence="1">
    <location>
        <begin position="194"/>
        <end position="200"/>
    </location>
</feature>
<feature type="transmembrane region" description="Helical; Name=6" evidence="1">
    <location>
        <begin position="201"/>
        <end position="222"/>
    </location>
</feature>
<feature type="topological domain" description="Cytoplasmic" evidence="1">
    <location>
        <begin position="223"/>
        <end position="263"/>
    </location>
</feature>
<feature type="region of interest" description="Interaction with CALM" evidence="1">
    <location>
        <begin position="227"/>
        <end position="237"/>
    </location>
</feature>
<feature type="region of interest" description="Disordered" evidence="4">
    <location>
        <begin position="240"/>
        <end position="263"/>
    </location>
</feature>
<feature type="short sequence motif" description="NPA 1" evidence="1">
    <location>
        <begin position="68"/>
        <end position="70"/>
    </location>
</feature>
<feature type="short sequence motif" description="NPA 2" evidence="1">
    <location>
        <begin position="184"/>
        <end position="186"/>
    </location>
</feature>
<feature type="site" description="Important for water channel gating" evidence="1">
    <location>
        <position position="149"/>
    </location>
</feature>
<feature type="site" description="Interaction with BFSP1" evidence="1">
    <location>
        <position position="246"/>
    </location>
</feature>
<feature type="site" description="interaction with BFSP1" evidence="1">
    <location>
        <position position="250"/>
    </location>
</feature>
<feature type="modified residue" description="Phosphoserine" evidence="1">
    <location>
        <position position="235"/>
    </location>
</feature>
<feature type="modified residue" description="Phosphoserine" evidence="1">
    <location>
        <position position="243"/>
    </location>
</feature>
<feature type="modified residue" description="Phosphoserine" evidence="1">
    <location>
        <position position="245"/>
    </location>
</feature>
<feature type="modified residue" description="Deamidated asparagine" evidence="2">
    <location>
        <position position="246"/>
    </location>
</feature>
<protein>
    <recommendedName>
        <fullName evidence="2">Lens fiber major intrinsic protein</fullName>
    </recommendedName>
    <alternativeName>
        <fullName evidence="2">Aquaporin-0</fullName>
    </alternativeName>
</protein>
<accession>A2IBY8</accession>
<sequence length="263" mass="28233">MWELRSASFWRAIFAEFFATLFYVFFGLGASLRWTPGPLHVLQVALAFGLALATLVQAVGHISGAHVNPAVTFAFLVGSQMSLLRAFCYMAAQLLGAVAGAAVLYSVTPPAVRGNLALNTLHPGVSVGQATTVEIFLTLQFVLCIFATYDERRNGRLGSVALAVGFSLTLGHLFGMYYTGAGMNPARSFAPAILTRNFTNHWVYWVGPIIGGGLGSLLYDFLLFPRLKSVSERLSILKGARPSDSNGQPEGTGEPVELKTQAL</sequence>